<accession>A1SND2</accession>
<protein>
    <recommendedName>
        <fullName evidence="1">LexA repressor</fullName>
        <ecNumber evidence="1">3.4.21.88</ecNumber>
    </recommendedName>
</protein>
<evidence type="ECO:0000255" key="1">
    <source>
        <dbReference type="HAMAP-Rule" id="MF_00015"/>
    </source>
</evidence>
<evidence type="ECO:0000256" key="2">
    <source>
        <dbReference type="SAM" id="MobiDB-lite"/>
    </source>
</evidence>
<organism>
    <name type="scientific">Nocardioides sp. (strain ATCC BAA-499 / JS614)</name>
    <dbReference type="NCBI Taxonomy" id="196162"/>
    <lineage>
        <taxon>Bacteria</taxon>
        <taxon>Bacillati</taxon>
        <taxon>Actinomycetota</taxon>
        <taxon>Actinomycetes</taxon>
        <taxon>Propionibacteriales</taxon>
        <taxon>Nocardioidaceae</taxon>
        <taxon>Nocardioides</taxon>
    </lineage>
</organism>
<name>LEXA_NOCSJ</name>
<reference key="1">
    <citation type="submission" date="2006-12" db="EMBL/GenBank/DDBJ databases">
        <title>Complete sequence of chromosome 1 of Nocardioides sp. JS614.</title>
        <authorList>
            <person name="Copeland A."/>
            <person name="Lucas S."/>
            <person name="Lapidus A."/>
            <person name="Barry K."/>
            <person name="Detter J.C."/>
            <person name="Glavina del Rio T."/>
            <person name="Hammon N."/>
            <person name="Israni S."/>
            <person name="Dalin E."/>
            <person name="Tice H."/>
            <person name="Pitluck S."/>
            <person name="Thompson L.S."/>
            <person name="Brettin T."/>
            <person name="Bruce D."/>
            <person name="Han C."/>
            <person name="Tapia R."/>
            <person name="Schmutz J."/>
            <person name="Larimer F."/>
            <person name="Land M."/>
            <person name="Hauser L."/>
            <person name="Kyrpides N."/>
            <person name="Kim E."/>
            <person name="Mattes T."/>
            <person name="Gossett J."/>
            <person name="Richardson P."/>
        </authorList>
    </citation>
    <scope>NUCLEOTIDE SEQUENCE [LARGE SCALE GENOMIC DNA]</scope>
    <source>
        <strain>ATCC BAA-499 / JS614</strain>
    </source>
</reference>
<proteinExistence type="inferred from homology"/>
<gene>
    <name evidence="1" type="primary">lexA</name>
    <name type="ordered locus">Noca_3817</name>
</gene>
<feature type="chain" id="PRO_0000322750" description="LexA repressor">
    <location>
        <begin position="1"/>
        <end position="246"/>
    </location>
</feature>
<feature type="DNA-binding region" description="H-T-H motif" evidence="1">
    <location>
        <begin position="52"/>
        <end position="72"/>
    </location>
</feature>
<feature type="region of interest" description="Disordered" evidence="2">
    <location>
        <begin position="1"/>
        <end position="34"/>
    </location>
</feature>
<feature type="active site" description="For autocatalytic cleavage activity" evidence="1">
    <location>
        <position position="170"/>
    </location>
</feature>
<feature type="active site" description="For autocatalytic cleavage activity" evidence="1">
    <location>
        <position position="207"/>
    </location>
</feature>
<feature type="site" description="Cleavage; by autolysis" evidence="1">
    <location>
        <begin position="135"/>
        <end position="136"/>
    </location>
</feature>
<comment type="function">
    <text evidence="1">Represses a number of genes involved in the response to DNA damage (SOS response), including recA and lexA. In the presence of single-stranded DNA, RecA interacts with LexA causing an autocatalytic cleavage which disrupts the DNA-binding part of LexA, leading to derepression of the SOS regulon and eventually DNA repair.</text>
</comment>
<comment type="catalytic activity">
    <reaction evidence="1">
        <text>Hydrolysis of Ala-|-Gly bond in repressor LexA.</text>
        <dbReference type="EC" id="3.4.21.88"/>
    </reaction>
</comment>
<comment type="subunit">
    <text evidence="1">Homodimer.</text>
</comment>
<comment type="similarity">
    <text evidence="1">Belongs to the peptidase S24 family.</text>
</comment>
<keyword id="KW-0068">Autocatalytic cleavage</keyword>
<keyword id="KW-0227">DNA damage</keyword>
<keyword id="KW-0234">DNA repair</keyword>
<keyword id="KW-0235">DNA replication</keyword>
<keyword id="KW-0238">DNA-binding</keyword>
<keyword id="KW-0378">Hydrolase</keyword>
<keyword id="KW-1185">Reference proteome</keyword>
<keyword id="KW-0678">Repressor</keyword>
<keyword id="KW-0742">SOS response</keyword>
<keyword id="KW-0804">Transcription</keyword>
<keyword id="KW-0805">Transcription regulation</keyword>
<dbReference type="EC" id="3.4.21.88" evidence="1"/>
<dbReference type="EMBL" id="CP000509">
    <property type="protein sequence ID" value="ABL83317.1"/>
    <property type="molecule type" value="Genomic_DNA"/>
</dbReference>
<dbReference type="RefSeq" id="WP_011757248.1">
    <property type="nucleotide sequence ID" value="NC_008699.1"/>
</dbReference>
<dbReference type="SMR" id="A1SND2"/>
<dbReference type="STRING" id="196162.Noca_3817"/>
<dbReference type="MEROPS" id="S24.001"/>
<dbReference type="KEGG" id="nca:Noca_3817"/>
<dbReference type="eggNOG" id="COG1974">
    <property type="taxonomic scope" value="Bacteria"/>
</dbReference>
<dbReference type="HOGENOM" id="CLU_066192_45_0_11"/>
<dbReference type="OrthoDB" id="9802364at2"/>
<dbReference type="Proteomes" id="UP000000640">
    <property type="component" value="Chromosome"/>
</dbReference>
<dbReference type="GO" id="GO:0003677">
    <property type="term" value="F:DNA binding"/>
    <property type="evidence" value="ECO:0007669"/>
    <property type="project" value="UniProtKB-UniRule"/>
</dbReference>
<dbReference type="GO" id="GO:0004252">
    <property type="term" value="F:serine-type endopeptidase activity"/>
    <property type="evidence" value="ECO:0007669"/>
    <property type="project" value="UniProtKB-UniRule"/>
</dbReference>
<dbReference type="GO" id="GO:0006281">
    <property type="term" value="P:DNA repair"/>
    <property type="evidence" value="ECO:0007669"/>
    <property type="project" value="UniProtKB-UniRule"/>
</dbReference>
<dbReference type="GO" id="GO:0006260">
    <property type="term" value="P:DNA replication"/>
    <property type="evidence" value="ECO:0007669"/>
    <property type="project" value="UniProtKB-UniRule"/>
</dbReference>
<dbReference type="GO" id="GO:0045892">
    <property type="term" value="P:negative regulation of DNA-templated transcription"/>
    <property type="evidence" value="ECO:0007669"/>
    <property type="project" value="UniProtKB-UniRule"/>
</dbReference>
<dbReference type="GO" id="GO:0006508">
    <property type="term" value="P:proteolysis"/>
    <property type="evidence" value="ECO:0007669"/>
    <property type="project" value="InterPro"/>
</dbReference>
<dbReference type="GO" id="GO:0009432">
    <property type="term" value="P:SOS response"/>
    <property type="evidence" value="ECO:0007669"/>
    <property type="project" value="UniProtKB-UniRule"/>
</dbReference>
<dbReference type="CDD" id="cd06529">
    <property type="entry name" value="S24_LexA-like"/>
    <property type="match status" value="1"/>
</dbReference>
<dbReference type="FunFam" id="1.10.10.10:FF:000009">
    <property type="entry name" value="LexA repressor"/>
    <property type="match status" value="1"/>
</dbReference>
<dbReference type="FunFam" id="2.10.109.10:FF:000001">
    <property type="entry name" value="LexA repressor"/>
    <property type="match status" value="1"/>
</dbReference>
<dbReference type="Gene3D" id="2.10.109.10">
    <property type="entry name" value="Umud Fragment, subunit A"/>
    <property type="match status" value="1"/>
</dbReference>
<dbReference type="Gene3D" id="1.10.10.10">
    <property type="entry name" value="Winged helix-like DNA-binding domain superfamily/Winged helix DNA-binding domain"/>
    <property type="match status" value="1"/>
</dbReference>
<dbReference type="HAMAP" id="MF_00015">
    <property type="entry name" value="LexA"/>
    <property type="match status" value="1"/>
</dbReference>
<dbReference type="InterPro" id="IPR006200">
    <property type="entry name" value="LexA"/>
</dbReference>
<dbReference type="InterPro" id="IPR039418">
    <property type="entry name" value="LexA-like"/>
</dbReference>
<dbReference type="InterPro" id="IPR036286">
    <property type="entry name" value="LexA/Signal_pep-like_sf"/>
</dbReference>
<dbReference type="InterPro" id="IPR006199">
    <property type="entry name" value="LexA_DNA-bd_dom"/>
</dbReference>
<dbReference type="InterPro" id="IPR050077">
    <property type="entry name" value="LexA_repressor"/>
</dbReference>
<dbReference type="InterPro" id="IPR006197">
    <property type="entry name" value="Peptidase_S24_LexA"/>
</dbReference>
<dbReference type="InterPro" id="IPR015927">
    <property type="entry name" value="Peptidase_S24_S26A/B/C"/>
</dbReference>
<dbReference type="InterPro" id="IPR036388">
    <property type="entry name" value="WH-like_DNA-bd_sf"/>
</dbReference>
<dbReference type="InterPro" id="IPR036390">
    <property type="entry name" value="WH_DNA-bd_sf"/>
</dbReference>
<dbReference type="NCBIfam" id="TIGR00498">
    <property type="entry name" value="lexA"/>
    <property type="match status" value="1"/>
</dbReference>
<dbReference type="PANTHER" id="PTHR33516">
    <property type="entry name" value="LEXA REPRESSOR"/>
    <property type="match status" value="1"/>
</dbReference>
<dbReference type="PANTHER" id="PTHR33516:SF2">
    <property type="entry name" value="LEXA REPRESSOR-RELATED"/>
    <property type="match status" value="1"/>
</dbReference>
<dbReference type="Pfam" id="PF01726">
    <property type="entry name" value="LexA_DNA_bind"/>
    <property type="match status" value="1"/>
</dbReference>
<dbReference type="Pfam" id="PF00717">
    <property type="entry name" value="Peptidase_S24"/>
    <property type="match status" value="1"/>
</dbReference>
<dbReference type="PRINTS" id="PR00726">
    <property type="entry name" value="LEXASERPTASE"/>
</dbReference>
<dbReference type="SUPFAM" id="SSF51306">
    <property type="entry name" value="LexA/Signal peptidase"/>
    <property type="match status" value="1"/>
</dbReference>
<dbReference type="SUPFAM" id="SSF46785">
    <property type="entry name" value="Winged helix' DNA-binding domain"/>
    <property type="match status" value="1"/>
</dbReference>
<sequence length="246" mass="26607">MATPQTGKKTPSRRVSELPDGPPDATGLTPRQQRVLAHIKDSIEKRGYPPSMREIGEAVGLTSSSSVAHQLKTLEEKGFLKRDPHRPRALEVFLPEVMAARRSMSAAEESSFDETGVGDALPAAQYVPVVGRIAAGGPILAEERVEDVFPLPRQLVGDGQLFLLEVRGDSMIEAAICDGDYVAIRQQPTAENGEIVAAMIDGEATVKTFQRKDGNVWLLPHNPAYDPIDGTHATILGKVTAVLRRV</sequence>